<dbReference type="EMBL" id="EF577046">
    <property type="protein sequence ID" value="ABU62812.1"/>
    <property type="molecule type" value="mRNA"/>
</dbReference>
<dbReference type="SMR" id="B2KNH9"/>
<dbReference type="GO" id="GO:0005576">
    <property type="term" value="C:extracellular region"/>
    <property type="evidence" value="ECO:0007669"/>
    <property type="project" value="UniProtKB-SubCell"/>
</dbReference>
<dbReference type="GO" id="GO:0005537">
    <property type="term" value="F:D-mannose binding"/>
    <property type="evidence" value="ECO:0000314"/>
    <property type="project" value="UniProtKB"/>
</dbReference>
<dbReference type="GO" id="GO:0050832">
    <property type="term" value="P:defense response to fungus"/>
    <property type="evidence" value="ECO:0000314"/>
    <property type="project" value="UniProtKB"/>
</dbReference>
<dbReference type="GO" id="GO:0031640">
    <property type="term" value="P:killing of cells of another organism"/>
    <property type="evidence" value="ECO:0007669"/>
    <property type="project" value="UniProtKB-KW"/>
</dbReference>
<dbReference type="GO" id="GO:0034120">
    <property type="term" value="P:positive regulation of erythrocyte aggregation"/>
    <property type="evidence" value="ECO:0000314"/>
    <property type="project" value="UniProtKB"/>
</dbReference>
<dbReference type="CDD" id="cd00028">
    <property type="entry name" value="B_lectin"/>
    <property type="match status" value="1"/>
</dbReference>
<dbReference type="Gene3D" id="2.90.10.10">
    <property type="entry name" value="Bulb-type lectin domain"/>
    <property type="match status" value="1"/>
</dbReference>
<dbReference type="InterPro" id="IPR001480">
    <property type="entry name" value="Bulb-type_lectin_dom"/>
</dbReference>
<dbReference type="InterPro" id="IPR036426">
    <property type="entry name" value="Bulb-type_lectin_dom_sf"/>
</dbReference>
<dbReference type="SMART" id="SM00108">
    <property type="entry name" value="B_lectin"/>
    <property type="match status" value="1"/>
</dbReference>
<dbReference type="SUPFAM" id="SSF51110">
    <property type="entry name" value="alpha-D-mannose-specific plant lectins"/>
    <property type="match status" value="1"/>
</dbReference>
<dbReference type="PROSITE" id="PS50927">
    <property type="entry name" value="BULB_LECTIN"/>
    <property type="match status" value="1"/>
</dbReference>
<feature type="signal peptide" evidence="4">
    <location>
        <begin position="1"/>
        <end position="24"/>
    </location>
</feature>
<feature type="chain" id="PRO_0000395875" description="Mannose-specific lectin">
    <location>
        <begin position="25"/>
        <end position="167"/>
    </location>
</feature>
<feature type="domain" description="Bulb-type lectin" evidence="2">
    <location>
        <begin position="25"/>
        <end position="138"/>
    </location>
</feature>
<feature type="disulfide bond" evidence="1 2">
    <location>
        <begin position="53"/>
        <end position="76"/>
    </location>
</feature>
<gene>
    <name evidence="8" type="primary">dfa</name>
</gene>
<name>LEC_DENFN</name>
<reference evidence="7" key="1">
    <citation type="journal article" date="2009" name="Plant Cell Rep.">
        <title>Dendrobium findleyanum agglutinin: production, localization, anti-fungal activity and gene characterization.</title>
        <authorList>
            <person name="Sattayasai N."/>
            <person name="Sudmoon R."/>
            <person name="Nuchadomrong S."/>
            <person name="Chaveerach A."/>
            <person name="Kuehnle A.R."/>
            <person name="Mudalige-Jayawickrama R.G."/>
            <person name="Bunyatratchata W."/>
        </authorList>
    </citation>
    <scope>NUCLEOTIDE SEQUENCE [MRNA]</scope>
    <scope>PROTEIN SEQUENCE OF 25-26</scope>
    <scope>FUNCTION</scope>
    <scope>TISSUE SPECIFICITY</scope>
    <scope>DEVELOPMENTAL STAGE</scope>
    <scope>IDENTIFICATION BY MASS SPECTROMETRY</scope>
    <source>
        <tissue evidence="4">Pseudobulb</tissue>
    </source>
</reference>
<reference evidence="7" key="2">
    <citation type="journal article" date="2008" name="Acta Biochim. Biophys. Sin.">
        <title>Thermostable mannose-binding lectin from Dendrobium findleyanum with activities dependent on sulfhydryl content.</title>
        <authorList>
            <person name="Sudmoon R."/>
            <person name="Sattayasai N."/>
            <person name="Bunyatratchata W."/>
            <person name="Chaveerach A."/>
            <person name="Nuchadomrong S."/>
        </authorList>
    </citation>
    <scope>FUNCTION</scope>
    <scope>SUBUNIT</scope>
    <scope>TISSUE SPECIFICITY</scope>
    <scope>IDENTIFICATION BY MASS SPECTROMETRY</scope>
    <source>
        <tissue evidence="3">Pseudobulb</tissue>
    </source>
</reference>
<accession>B2KNH9</accession>
<proteinExistence type="evidence at protein level"/>
<protein>
    <recommendedName>
        <fullName>Mannose-specific lectin</fullName>
    </recommendedName>
    <alternativeName>
        <fullName evidence="5 6 8">Agglutinin</fullName>
    </alternativeName>
</protein>
<comment type="function">
    <text evidence="3 4">Mannose-specific lectin. Shows agglutinating activity towards chicken erythrocytes. Has antifungal activity against A.alternata and Collectotrichum species.</text>
</comment>
<comment type="subunit">
    <text evidence="3">Homotetramer.</text>
</comment>
<comment type="subcellular location">
    <subcellularLocation>
        <location evidence="1">Secreted</location>
    </subcellularLocation>
</comment>
<comment type="tissue specificity">
    <text evidence="3 4">Expressed in the pseudobulb, with highest levels of expression in the non-swollen internode (at protein level).</text>
</comment>
<comment type="developmental stage">
    <text evidence="4">Detected at low levels in very young and young stages, before increasing to high levels during the nearly mature and mature stages.</text>
</comment>
<comment type="miscellaneous">
    <text evidence="3">Mannose-binding activity stable when incubated at 85 degrees Celsius for 10 minutes, and increases 3 to 4 fold when incubated at 85 degrees Celsius for 10 minutes in the presence of 0.14 M 2-mercaptoethanol. Mannose-binding activity decreases to 27% when incubated at 85 degrees Celsius for 10 minutes in the presence of 0.35 M iodoacetate. Antifungal and hemagglutinating activity stable when incubated at 100 degrees Celsius for 5 minutes. Antifungal and hemagglutinating activity increase when incubated at 100 degrees Celsius for 5 minutes in the presence of 0.14 M 2-mercaptoethanol.</text>
</comment>
<keyword id="KW-0929">Antimicrobial</keyword>
<keyword id="KW-0903">Direct protein sequencing</keyword>
<keyword id="KW-1015">Disulfide bond</keyword>
<keyword id="KW-0295">Fungicide</keyword>
<keyword id="KW-0348">Hemagglutinin</keyword>
<keyword id="KW-0430">Lectin</keyword>
<keyword id="KW-0465">Mannose-binding</keyword>
<keyword id="KW-0611">Plant defense</keyword>
<keyword id="KW-0964">Secreted</keyword>
<keyword id="KW-0732">Signal</keyword>
<evidence type="ECO:0000250" key="1">
    <source>
        <dbReference type="UniProtKB" id="P30617"/>
    </source>
</evidence>
<evidence type="ECO:0000255" key="2">
    <source>
        <dbReference type="PROSITE-ProRule" id="PRU00038"/>
    </source>
</evidence>
<evidence type="ECO:0000269" key="3">
    <source>
    </source>
</evidence>
<evidence type="ECO:0000269" key="4">
    <source>
    </source>
</evidence>
<evidence type="ECO:0000303" key="5">
    <source>
    </source>
</evidence>
<evidence type="ECO:0000303" key="6">
    <source>
    </source>
</evidence>
<evidence type="ECO:0000305" key="7"/>
<evidence type="ECO:0000312" key="8">
    <source>
        <dbReference type="EMBL" id="ABU62812.1"/>
    </source>
</evidence>
<organism>
    <name type="scientific">Dendrobium findlayanum</name>
    <name type="common">Findlay's orchid</name>
    <dbReference type="NCBI Taxonomy" id="179355"/>
    <lineage>
        <taxon>Eukaryota</taxon>
        <taxon>Viridiplantae</taxon>
        <taxon>Streptophyta</taxon>
        <taxon>Embryophyta</taxon>
        <taxon>Tracheophyta</taxon>
        <taxon>Spermatophyta</taxon>
        <taxon>Magnoliopsida</taxon>
        <taxon>Liliopsida</taxon>
        <taxon>Asparagales</taxon>
        <taxon>Orchidaceae</taxon>
        <taxon>Epidendroideae</taxon>
        <taxon>Malaxideae</taxon>
        <taxon>Dendrobiinae</taxon>
        <taxon>Dendrobium</taxon>
    </lineage>
</organism>
<sequence>MAFSISSTMIFLLSLALFSTLVSADNHLLPGERLNPGNFLKQDRYMLIMQEDCNLVLYNLNKPEWATKTANQGSRCFVTLQSDGNFVIYDEHEQEGRNEAIWASKTDGENGNYVIILQKDGNLVLYSKPIFATGTNRFGSTAVVVAKRNRKAHFGVEQNIIEVTTNL</sequence>